<proteinExistence type="inferred from homology"/>
<keyword id="KW-0175">Coiled coil</keyword>
<keyword id="KW-0436">Ligase</keyword>
<reference key="1">
    <citation type="journal article" date="2007" name="PLoS ONE">
        <title>Paradoxical DNA repair and peroxide resistance gene conservation in Bacillus pumilus SAFR-032.</title>
        <authorList>
            <person name="Gioia J."/>
            <person name="Yerrapragada S."/>
            <person name="Qin X."/>
            <person name="Jiang H."/>
            <person name="Igboeli O.C."/>
            <person name="Muzny D."/>
            <person name="Dugan-Rocha S."/>
            <person name="Ding Y."/>
            <person name="Hawes A."/>
            <person name="Liu W."/>
            <person name="Perez L."/>
            <person name="Kovar C."/>
            <person name="Dinh H."/>
            <person name="Lee S."/>
            <person name="Nazareth L."/>
            <person name="Blyth P."/>
            <person name="Holder M."/>
            <person name="Buhay C."/>
            <person name="Tirumalai M.R."/>
            <person name="Liu Y."/>
            <person name="Dasgupta I."/>
            <person name="Bokhetache L."/>
            <person name="Fujita M."/>
            <person name="Karouia F."/>
            <person name="Eswara Moorthy P."/>
            <person name="Siefert J."/>
            <person name="Uzman A."/>
            <person name="Buzumbo P."/>
            <person name="Verma A."/>
            <person name="Zwiya H."/>
            <person name="McWilliams B.D."/>
            <person name="Olowu A."/>
            <person name="Clinkenbeard K.D."/>
            <person name="Newcombe D."/>
            <person name="Golebiewski L."/>
            <person name="Petrosino J.F."/>
            <person name="Nicholson W.L."/>
            <person name="Fox G.E."/>
            <person name="Venkateswaran K."/>
            <person name="Highlander S.K."/>
            <person name="Weinstock G.M."/>
        </authorList>
    </citation>
    <scope>NUCLEOTIDE SEQUENCE [LARGE SCALE GENOMIC DNA]</scope>
    <source>
        <strain>SAFR-032</strain>
    </source>
</reference>
<dbReference type="EC" id="6.-.-.-" evidence="1"/>
<dbReference type="EMBL" id="CP000813">
    <property type="protein sequence ID" value="ABV62088.1"/>
    <property type="molecule type" value="Genomic_DNA"/>
</dbReference>
<dbReference type="RefSeq" id="WP_012009861.1">
    <property type="nucleotide sequence ID" value="NC_009848.4"/>
</dbReference>
<dbReference type="SMR" id="A8FCX1"/>
<dbReference type="STRING" id="315750.BPUM_1405"/>
<dbReference type="GeneID" id="5620668"/>
<dbReference type="KEGG" id="bpu:BPUM_1405"/>
<dbReference type="eggNOG" id="COG4365">
    <property type="taxonomic scope" value="Bacteria"/>
</dbReference>
<dbReference type="HOGENOM" id="CLU_022249_1_0_9"/>
<dbReference type="OrthoDB" id="9765151at2"/>
<dbReference type="Proteomes" id="UP000001355">
    <property type="component" value="Chromosome"/>
</dbReference>
<dbReference type="GO" id="GO:0016874">
    <property type="term" value="F:ligase activity"/>
    <property type="evidence" value="ECO:0007669"/>
    <property type="project" value="UniProtKB-UniRule"/>
</dbReference>
<dbReference type="HAMAP" id="MF_01867">
    <property type="entry name" value="BshC"/>
    <property type="match status" value="1"/>
</dbReference>
<dbReference type="InterPro" id="IPR011199">
    <property type="entry name" value="Bacillithiol_biosynth_BshC"/>
</dbReference>
<dbReference type="InterPro" id="IPR055399">
    <property type="entry name" value="CC_BshC"/>
</dbReference>
<dbReference type="InterPro" id="IPR055398">
    <property type="entry name" value="Rossmann-like_BshC"/>
</dbReference>
<dbReference type="NCBIfam" id="TIGR03998">
    <property type="entry name" value="thiol_BshC"/>
    <property type="match status" value="1"/>
</dbReference>
<dbReference type="Pfam" id="PF24850">
    <property type="entry name" value="CC_BshC"/>
    <property type="match status" value="1"/>
</dbReference>
<dbReference type="Pfam" id="PF10079">
    <property type="entry name" value="Rossmann-like_BshC"/>
    <property type="match status" value="1"/>
</dbReference>
<dbReference type="PIRSF" id="PIRSF012535">
    <property type="entry name" value="UCP012535"/>
    <property type="match status" value="1"/>
</dbReference>
<comment type="function">
    <text evidence="1">Involved in bacillithiol (BSH) biosynthesis. May catalyze the last step of the pathway, the addition of cysteine to glucosamine malate (GlcN-Mal) to generate BSH.</text>
</comment>
<comment type="similarity">
    <text evidence="1">Belongs to the BshC family.</text>
</comment>
<accession>A8FCX1</accession>
<protein>
    <recommendedName>
        <fullName evidence="1">Putative cysteine ligase BshC</fullName>
        <ecNumber evidence="1">6.-.-.-</ecNumber>
    </recommendedName>
</protein>
<name>BSHC_BACP2</name>
<evidence type="ECO:0000255" key="1">
    <source>
        <dbReference type="HAMAP-Rule" id="MF_01867"/>
    </source>
</evidence>
<gene>
    <name evidence="1" type="primary">bshC</name>
    <name type="ordered locus">BPUM_1405</name>
</gene>
<sequence>MQLTELSIRSQNLFIRDYIEEKKEMTTFFDYDIHSEHTWKKRYDDLMKMSFPREALADYMSAYHAKFESAAMRQNIEKIRDKRSVMVVGGQQAGLLTGPLYTIHKIISIIQFAKEKETELGVPVIPVFWVAGEDHDVDEINFVYTSGEKGPVKQKLSLHNVKKAAAKRIPLDQEKTEIWLRDVFSTYEESAYTNDLLVQLLRCLRKSQTFTDFFEWIVCDLFEEDGLLLFNSGDLGVKPLERTLFKHIVETNDEVTNRLNESQAAMKRAGYQPIIEAGDNQANLFYEYDEERFLIEKENGRFFISEVGLTWTKEELLKEVEEHPERFSNNVVTRPLMQETLLPTLAFMAGHGEVNYWGELKGIFEHFHLKMAPVLPRLHVTILERHIDKKLPVRELSVEEVLTNGVKEKKDAHFQQSLPDSFVQAVEHAKRELANAHGVMRQEALEIEPNFEQLLDKNAKFIEDQLQFVYQKVAQRVEEKEGYILRDFERIENSLKPLDAPQERIWNIMYFLNKYGPEFFKTFKNLPFSFQNKQQIVKL</sequence>
<organism>
    <name type="scientific">Bacillus pumilus (strain SAFR-032)</name>
    <dbReference type="NCBI Taxonomy" id="315750"/>
    <lineage>
        <taxon>Bacteria</taxon>
        <taxon>Bacillati</taxon>
        <taxon>Bacillota</taxon>
        <taxon>Bacilli</taxon>
        <taxon>Bacillales</taxon>
        <taxon>Bacillaceae</taxon>
        <taxon>Bacillus</taxon>
    </lineage>
</organism>
<feature type="chain" id="PRO_0000378220" description="Putative cysteine ligase BshC">
    <location>
        <begin position="1"/>
        <end position="539"/>
    </location>
</feature>
<feature type="coiled-coil region" evidence="1">
    <location>
        <begin position="249"/>
        <end position="270"/>
    </location>
</feature>